<organism>
    <name type="scientific">Escherichia coli (strain K12)</name>
    <dbReference type="NCBI Taxonomy" id="83333"/>
    <lineage>
        <taxon>Bacteria</taxon>
        <taxon>Pseudomonadati</taxon>
        <taxon>Pseudomonadota</taxon>
        <taxon>Gammaproteobacteria</taxon>
        <taxon>Enterobacterales</taxon>
        <taxon>Enterobacteriaceae</taxon>
        <taxon>Escherichia</taxon>
    </lineage>
</organism>
<evidence type="ECO:0000255" key="1">
    <source>
        <dbReference type="HAMAP-Rule" id="MF_00930"/>
    </source>
</evidence>
<evidence type="ECO:0000269" key="2">
    <source>
    </source>
</evidence>
<evidence type="ECO:0000305" key="3"/>
<evidence type="ECO:0007829" key="4">
    <source>
        <dbReference type="PDB" id="2P4V"/>
    </source>
</evidence>
<keyword id="KW-0002">3D-structure</keyword>
<keyword id="KW-0903">Direct protein sequencing</keyword>
<keyword id="KW-0238">DNA-binding</keyword>
<keyword id="KW-1185">Reference proteome</keyword>
<keyword id="KW-0804">Transcription</keyword>
<keyword id="KW-0805">Transcription regulation</keyword>
<sequence>MKTPLVTREGYEKLKQELNYLWREERPEVTKKVTWAASLGDRSENADYQYNKKRLREIDRRVRYLTKCLENLKIVDYSPQQEGKVFFGAWVEIENDDGVTHRFRIVGYDEIFGRKDYISIDSPMARALLKKEVGDLAVVNTPAGEASWYVNAIEYVKP</sequence>
<accession>P30128</accession>
<accession>P78114</accession>
<accession>Q2M771</accession>
<reference key="1">
    <citation type="journal article" date="1993" name="Cell">
        <title>Transcript cleavage factors from E. coli.</title>
        <authorList>
            <person name="Borukhov S."/>
            <person name="Sagitov V."/>
            <person name="Goldfarb A."/>
        </authorList>
    </citation>
    <scope>NUCLEOTIDE SEQUENCE [GENOMIC DNA]</scope>
    <scope>PROTEIN SEQUENCE OF 1-15</scope>
    <scope>FUNCTION</scope>
</reference>
<reference key="2">
    <citation type="journal article" date="1997" name="Science">
        <title>The complete genome sequence of Escherichia coli K-12.</title>
        <authorList>
            <person name="Blattner F.R."/>
            <person name="Plunkett G. III"/>
            <person name="Bloch C.A."/>
            <person name="Perna N.T."/>
            <person name="Burland V."/>
            <person name="Riley M."/>
            <person name="Collado-Vides J."/>
            <person name="Glasner J.D."/>
            <person name="Rode C.K."/>
            <person name="Mayhew G.F."/>
            <person name="Gregor J."/>
            <person name="Davis N.W."/>
            <person name="Kirkpatrick H.A."/>
            <person name="Goeden M.A."/>
            <person name="Rose D.J."/>
            <person name="Mau B."/>
            <person name="Shao Y."/>
        </authorList>
    </citation>
    <scope>NUCLEOTIDE SEQUENCE [LARGE SCALE GENOMIC DNA]</scope>
    <source>
        <strain>K12 / MG1655 / ATCC 47076</strain>
    </source>
</reference>
<reference key="3">
    <citation type="journal article" date="2006" name="Mol. Syst. Biol.">
        <title>Highly accurate genome sequences of Escherichia coli K-12 strains MG1655 and W3110.</title>
        <authorList>
            <person name="Hayashi K."/>
            <person name="Morooka N."/>
            <person name="Yamamoto Y."/>
            <person name="Fujita K."/>
            <person name="Isono K."/>
            <person name="Choi S."/>
            <person name="Ohtsubo E."/>
            <person name="Baba T."/>
            <person name="Wanner B.L."/>
            <person name="Mori H."/>
            <person name="Horiuchi T."/>
        </authorList>
    </citation>
    <scope>NUCLEOTIDE SEQUENCE [LARGE SCALE GENOMIC DNA]</scope>
    <source>
        <strain>K12 / W3110 / ATCC 27325 / DSM 5911</strain>
    </source>
</reference>
<gene>
    <name evidence="1" type="primary">greB</name>
    <name type="ordered locus">b3406</name>
    <name type="ordered locus">JW3369</name>
</gene>
<dbReference type="EMBL" id="U81522">
    <property type="protein sequence ID" value="AAB39763.1"/>
    <property type="molecule type" value="Genomic_DNA"/>
</dbReference>
<dbReference type="EMBL" id="U18997">
    <property type="protein sequence ID" value="AAA58203.1"/>
    <property type="status" value="ALT_INIT"/>
    <property type="molecule type" value="Genomic_DNA"/>
</dbReference>
<dbReference type="EMBL" id="U00096">
    <property type="protein sequence ID" value="AAC76431.2"/>
    <property type="molecule type" value="Genomic_DNA"/>
</dbReference>
<dbReference type="EMBL" id="AP009048">
    <property type="protein sequence ID" value="BAE77885.1"/>
    <property type="molecule type" value="Genomic_DNA"/>
</dbReference>
<dbReference type="PIR" id="A65136">
    <property type="entry name" value="A65136"/>
</dbReference>
<dbReference type="RefSeq" id="WP_000856737.1">
    <property type="nucleotide sequence ID" value="NZ_SSZK01000008.1"/>
</dbReference>
<dbReference type="RefSeq" id="YP_026216.2">
    <property type="nucleotide sequence ID" value="NC_000913.3"/>
</dbReference>
<dbReference type="PDB" id="2P4V">
    <property type="method" value="X-ray"/>
    <property type="resolution" value="2.60 A"/>
    <property type="chains" value="A/B/C/D/E/F=1-158"/>
</dbReference>
<dbReference type="PDB" id="6RI7">
    <property type="method" value="EM"/>
    <property type="resolution" value="3.90 A"/>
    <property type="chains" value="F/G=1-158"/>
</dbReference>
<dbReference type="PDB" id="6RIN">
    <property type="method" value="EM"/>
    <property type="resolution" value="3.70 A"/>
    <property type="chains" value="F=1-158"/>
</dbReference>
<dbReference type="PDBsum" id="2P4V"/>
<dbReference type="PDBsum" id="6RI7"/>
<dbReference type="PDBsum" id="6RIN"/>
<dbReference type="SMR" id="P30128"/>
<dbReference type="BioGRID" id="4261264">
    <property type="interactions" value="41"/>
</dbReference>
<dbReference type="DIP" id="DIP-9834N"/>
<dbReference type="FunCoup" id="P30128">
    <property type="interactions" value="176"/>
</dbReference>
<dbReference type="IntAct" id="P30128">
    <property type="interactions" value="24"/>
</dbReference>
<dbReference type="STRING" id="511145.b3406"/>
<dbReference type="jPOST" id="P30128"/>
<dbReference type="PaxDb" id="511145-b3406"/>
<dbReference type="EnsemblBacteria" id="AAC76431">
    <property type="protein sequence ID" value="AAC76431"/>
    <property type="gene ID" value="b3406"/>
</dbReference>
<dbReference type="GeneID" id="2847706"/>
<dbReference type="KEGG" id="ecj:JW3369"/>
<dbReference type="KEGG" id="eco:b3406"/>
<dbReference type="KEGG" id="ecoc:C3026_18480"/>
<dbReference type="PATRIC" id="fig|1411691.4.peg.3323"/>
<dbReference type="EchoBASE" id="EB1538"/>
<dbReference type="eggNOG" id="COG0782">
    <property type="taxonomic scope" value="Bacteria"/>
</dbReference>
<dbReference type="HOGENOM" id="CLU_101379_3_0_6"/>
<dbReference type="InParanoid" id="P30128"/>
<dbReference type="OMA" id="DEIYGRN"/>
<dbReference type="PhylomeDB" id="P30128"/>
<dbReference type="BioCyc" id="EcoCyc:EG11578-MONOMER"/>
<dbReference type="EvolutionaryTrace" id="P30128"/>
<dbReference type="PRO" id="PR:P30128"/>
<dbReference type="Proteomes" id="UP000000625">
    <property type="component" value="Chromosome"/>
</dbReference>
<dbReference type="GO" id="GO:0003677">
    <property type="term" value="F:DNA binding"/>
    <property type="evidence" value="ECO:0007669"/>
    <property type="project" value="UniProtKB-UniRule"/>
</dbReference>
<dbReference type="GO" id="GO:0070063">
    <property type="term" value="F:RNA polymerase binding"/>
    <property type="evidence" value="ECO:0007669"/>
    <property type="project" value="InterPro"/>
</dbReference>
<dbReference type="GO" id="GO:0003711">
    <property type="term" value="F:transcription elongation factor activity"/>
    <property type="evidence" value="ECO:0000314"/>
    <property type="project" value="EcoCyc"/>
</dbReference>
<dbReference type="GO" id="GO:0006354">
    <property type="term" value="P:DNA-templated transcription elongation"/>
    <property type="evidence" value="ECO:0000318"/>
    <property type="project" value="GO_Central"/>
</dbReference>
<dbReference type="GO" id="GO:0006352">
    <property type="term" value="P:DNA-templated transcription initiation"/>
    <property type="evidence" value="ECO:0000314"/>
    <property type="project" value="EcoCyc"/>
</dbReference>
<dbReference type="GO" id="GO:0032784">
    <property type="term" value="P:regulation of DNA-templated transcription elongation"/>
    <property type="evidence" value="ECO:0000314"/>
    <property type="project" value="EcoCyc"/>
</dbReference>
<dbReference type="FunFam" id="1.10.287.180:FF:000001">
    <property type="entry name" value="Transcription elongation factor GreA"/>
    <property type="match status" value="1"/>
</dbReference>
<dbReference type="FunFam" id="3.10.50.30:FF:000001">
    <property type="entry name" value="Transcription elongation factor GreA"/>
    <property type="match status" value="1"/>
</dbReference>
<dbReference type="Gene3D" id="3.10.50.30">
    <property type="entry name" value="Transcription elongation factor, GreA/GreB, C-terminal domain"/>
    <property type="match status" value="1"/>
</dbReference>
<dbReference type="Gene3D" id="1.10.287.180">
    <property type="entry name" value="Transcription elongation factor, GreA/GreB, N-terminal domain"/>
    <property type="match status" value="1"/>
</dbReference>
<dbReference type="HAMAP" id="MF_00105">
    <property type="entry name" value="GreA_GreB"/>
    <property type="match status" value="1"/>
</dbReference>
<dbReference type="HAMAP" id="MF_00930">
    <property type="entry name" value="GreB"/>
    <property type="match status" value="1"/>
</dbReference>
<dbReference type="InterPro" id="IPR036953">
    <property type="entry name" value="GreA/GreB_C_sf"/>
</dbReference>
<dbReference type="InterPro" id="IPR018151">
    <property type="entry name" value="TF_GreA/GreB_CS"/>
</dbReference>
<dbReference type="InterPro" id="IPR028624">
    <property type="entry name" value="Tscrpt_elong_fac_GreA/B"/>
</dbReference>
<dbReference type="InterPro" id="IPR001437">
    <property type="entry name" value="Tscrpt_elong_fac_GreA/B_C"/>
</dbReference>
<dbReference type="InterPro" id="IPR023459">
    <property type="entry name" value="Tscrpt_elong_fac_GreA/B_fam"/>
</dbReference>
<dbReference type="InterPro" id="IPR022691">
    <property type="entry name" value="Tscrpt_elong_fac_GreA/B_N"/>
</dbReference>
<dbReference type="InterPro" id="IPR036805">
    <property type="entry name" value="Tscrpt_elong_fac_GreA/B_N_sf"/>
</dbReference>
<dbReference type="InterPro" id="IPR006358">
    <property type="entry name" value="Tscrpt_elong_fac_GreB"/>
</dbReference>
<dbReference type="NCBIfam" id="TIGR01461">
    <property type="entry name" value="greB"/>
    <property type="match status" value="1"/>
</dbReference>
<dbReference type="NCBIfam" id="NF002506">
    <property type="entry name" value="PRK01885.1"/>
    <property type="match status" value="1"/>
</dbReference>
<dbReference type="PANTHER" id="PTHR30437">
    <property type="entry name" value="TRANSCRIPTION ELONGATION FACTOR GREA"/>
    <property type="match status" value="1"/>
</dbReference>
<dbReference type="PANTHER" id="PTHR30437:SF6">
    <property type="entry name" value="TRANSCRIPTION ELONGATION FACTOR GREB"/>
    <property type="match status" value="1"/>
</dbReference>
<dbReference type="Pfam" id="PF01272">
    <property type="entry name" value="GreA_GreB"/>
    <property type="match status" value="1"/>
</dbReference>
<dbReference type="Pfam" id="PF03449">
    <property type="entry name" value="GreA_GreB_N"/>
    <property type="match status" value="1"/>
</dbReference>
<dbReference type="PIRSF" id="PIRSF006092">
    <property type="entry name" value="GreA_GreB"/>
    <property type="match status" value="1"/>
</dbReference>
<dbReference type="SUPFAM" id="SSF54534">
    <property type="entry name" value="FKBP-like"/>
    <property type="match status" value="1"/>
</dbReference>
<dbReference type="SUPFAM" id="SSF46557">
    <property type="entry name" value="GreA transcript cleavage protein, N-terminal domain"/>
    <property type="match status" value="1"/>
</dbReference>
<dbReference type="PROSITE" id="PS00829">
    <property type="entry name" value="GREAB_1"/>
    <property type="match status" value="1"/>
</dbReference>
<dbReference type="PROSITE" id="PS00830">
    <property type="entry name" value="GREAB_2"/>
    <property type="match status" value="1"/>
</dbReference>
<protein>
    <recommendedName>
        <fullName evidence="1">Transcription elongation factor GreB</fullName>
    </recommendedName>
    <alternativeName>
        <fullName evidence="1">Transcript cleavage factor GreB</fullName>
    </alternativeName>
</protein>
<comment type="function">
    <text evidence="1 2">Necessary for efficient RNA polymerase transcription elongation past template-encoded arresting sites. The arresting sites in DNA have the property of trapping a certain fraction of elongating RNA polymerases that pass through, resulting in locked ternary complexes. Cleavage of the nascent transcript by cleavage factors such as GreA or GreB allows the resumption of elongation from the new 3'terminus. GreB releases sequences of up to 9 nucleotides in length.</text>
</comment>
<comment type="similarity">
    <text evidence="1">Belongs to the GreA/GreB family. GreB subfamily.</text>
</comment>
<comment type="sequence caution" evidence="3">
    <conflict type="erroneous initiation">
        <sequence resource="EMBL-CDS" id="AAA58203"/>
    </conflict>
    <text>Extended N-terminus.</text>
</comment>
<feature type="chain" id="PRO_0000176922" description="Transcription elongation factor GreB">
    <location>
        <begin position="1"/>
        <end position="158"/>
    </location>
</feature>
<feature type="helix" evidence="4">
    <location>
        <begin position="8"/>
        <end position="23"/>
    </location>
</feature>
<feature type="helix" evidence="4">
    <location>
        <begin position="25"/>
        <end position="39"/>
    </location>
</feature>
<feature type="turn" evidence="4">
    <location>
        <begin position="42"/>
        <end position="44"/>
    </location>
</feature>
<feature type="helix" evidence="4">
    <location>
        <begin position="46"/>
        <end position="71"/>
    </location>
</feature>
<feature type="strand" evidence="4">
    <location>
        <begin position="79"/>
        <end position="81"/>
    </location>
</feature>
<feature type="strand" evidence="4">
    <location>
        <begin position="86"/>
        <end position="88"/>
    </location>
</feature>
<feature type="strand" evidence="4">
    <location>
        <begin position="90"/>
        <end position="94"/>
    </location>
</feature>
<feature type="strand" evidence="4">
    <location>
        <begin position="101"/>
        <end position="105"/>
    </location>
</feature>
<feature type="strand" evidence="4">
    <location>
        <begin position="113"/>
        <end position="115"/>
    </location>
</feature>
<feature type="helix" evidence="4">
    <location>
        <begin position="123"/>
        <end position="127"/>
    </location>
</feature>
<feature type="strand" evidence="4">
    <location>
        <begin position="136"/>
        <end position="140"/>
    </location>
</feature>
<feature type="strand" evidence="4">
    <location>
        <begin position="145"/>
        <end position="154"/>
    </location>
</feature>
<proteinExistence type="evidence at protein level"/>
<name>GREB_ECOLI</name>